<feature type="chain" id="PRO_0000377364" description="tRNA dimethylallyltransferase">
    <location>
        <begin position="1"/>
        <end position="299"/>
    </location>
</feature>
<feature type="region of interest" description="Interaction with substrate tRNA" evidence="1">
    <location>
        <begin position="47"/>
        <end position="50"/>
    </location>
</feature>
<feature type="region of interest" description="Interaction with substrate tRNA" evidence="1">
    <location>
        <begin position="172"/>
        <end position="176"/>
    </location>
</feature>
<feature type="binding site" evidence="1">
    <location>
        <begin position="22"/>
        <end position="29"/>
    </location>
    <ligand>
        <name>ATP</name>
        <dbReference type="ChEBI" id="CHEBI:30616"/>
    </ligand>
</feature>
<feature type="binding site" evidence="1">
    <location>
        <begin position="24"/>
        <end position="29"/>
    </location>
    <ligand>
        <name>substrate</name>
    </ligand>
</feature>
<feature type="site" description="Interaction with substrate tRNA" evidence="1">
    <location>
        <position position="119"/>
    </location>
</feature>
<organism>
    <name type="scientific">Endomicrobium trichonymphae</name>
    <dbReference type="NCBI Taxonomy" id="1408204"/>
    <lineage>
        <taxon>Bacteria</taxon>
        <taxon>Pseudomonadati</taxon>
        <taxon>Elusimicrobiota</taxon>
        <taxon>Endomicrobiia</taxon>
        <taxon>Endomicrobiales</taxon>
        <taxon>Endomicrobiaceae</taxon>
        <taxon>Candidatus Endomicrobiellum</taxon>
    </lineage>
</organism>
<evidence type="ECO:0000255" key="1">
    <source>
        <dbReference type="HAMAP-Rule" id="MF_00185"/>
    </source>
</evidence>
<proteinExistence type="inferred from homology"/>
<gene>
    <name evidence="1" type="primary">miaA</name>
    <name type="ordered locus">TGRD_475</name>
</gene>
<reference key="1">
    <citation type="journal article" date="2008" name="Proc. Natl. Acad. Sci. U.S.A.">
        <title>Complete genome of the uncultured termite group 1 bacteria in a single host protist cell.</title>
        <authorList>
            <person name="Hongoh Y."/>
            <person name="Sharma V.K."/>
            <person name="Prakash T."/>
            <person name="Noda S."/>
            <person name="Taylor T.D."/>
            <person name="Kudo T."/>
            <person name="Sakaki Y."/>
            <person name="Toyoda A."/>
            <person name="Hattori M."/>
            <person name="Ohkuma M."/>
        </authorList>
    </citation>
    <scope>NUCLEOTIDE SEQUENCE [LARGE SCALE GENOMIC DNA]</scope>
</reference>
<keyword id="KW-0067">ATP-binding</keyword>
<keyword id="KW-0460">Magnesium</keyword>
<keyword id="KW-0547">Nucleotide-binding</keyword>
<keyword id="KW-0808">Transferase</keyword>
<keyword id="KW-0819">tRNA processing</keyword>
<comment type="function">
    <text evidence="1">Catalyzes the transfer of a dimethylallyl group onto the adenine at position 37 in tRNAs that read codons beginning with uridine, leading to the formation of N6-(dimethylallyl)adenosine (i(6)A).</text>
</comment>
<comment type="catalytic activity">
    <reaction evidence="1">
        <text>adenosine(37) in tRNA + dimethylallyl diphosphate = N(6)-dimethylallyladenosine(37) in tRNA + diphosphate</text>
        <dbReference type="Rhea" id="RHEA:26482"/>
        <dbReference type="Rhea" id="RHEA-COMP:10162"/>
        <dbReference type="Rhea" id="RHEA-COMP:10375"/>
        <dbReference type="ChEBI" id="CHEBI:33019"/>
        <dbReference type="ChEBI" id="CHEBI:57623"/>
        <dbReference type="ChEBI" id="CHEBI:74411"/>
        <dbReference type="ChEBI" id="CHEBI:74415"/>
        <dbReference type="EC" id="2.5.1.75"/>
    </reaction>
</comment>
<comment type="cofactor">
    <cofactor evidence="1">
        <name>Mg(2+)</name>
        <dbReference type="ChEBI" id="CHEBI:18420"/>
    </cofactor>
</comment>
<comment type="subunit">
    <text evidence="1">Monomer.</text>
</comment>
<comment type="similarity">
    <text evidence="1">Belongs to the IPP transferase family.</text>
</comment>
<name>MIAA_ENDTX</name>
<accession>B1H0C6</accession>
<sequence length="299" mass="34366">MTLSFHYNRNDTKIMDIIVISGPTASGKTKKAVEFCKEKNGEIISCDSRQIYKYLDTGTNKEGVFLQNGLRRIDGVLQHLTDILNPDQNYSAAKFVKDADLKISEILKKGKVPVVTGGTGLYIKALLYGLDEMPKADKTLRKELKTKSQDELYSVLLKSDPEAAEKNKKNPQRLLRALEVNILSGRTMQEHFKSKSPRYNFGHYSISVDNKILYKKTNERCKYMIESGMIEETQKVLNMGFDKNCSALSGIGYRHIIQYLEKKISKEDLILEFSKDTRHYAKRQNTWFKAQPDVDFMFY</sequence>
<dbReference type="EC" id="2.5.1.75" evidence="1"/>
<dbReference type="EMBL" id="AP009510">
    <property type="protein sequence ID" value="BAG13958.1"/>
    <property type="molecule type" value="Genomic_DNA"/>
</dbReference>
<dbReference type="SMR" id="B1H0C6"/>
<dbReference type="STRING" id="471821.TGRD_475"/>
<dbReference type="KEGG" id="rsd:TGRD_475"/>
<dbReference type="PATRIC" id="fig|471821.5.peg.768"/>
<dbReference type="HOGENOM" id="CLU_032616_0_1_0"/>
<dbReference type="Proteomes" id="UP000001691">
    <property type="component" value="Chromosome"/>
</dbReference>
<dbReference type="GO" id="GO:0005524">
    <property type="term" value="F:ATP binding"/>
    <property type="evidence" value="ECO:0007669"/>
    <property type="project" value="UniProtKB-UniRule"/>
</dbReference>
<dbReference type="GO" id="GO:0052381">
    <property type="term" value="F:tRNA dimethylallyltransferase activity"/>
    <property type="evidence" value="ECO:0007669"/>
    <property type="project" value="UniProtKB-UniRule"/>
</dbReference>
<dbReference type="GO" id="GO:0006400">
    <property type="term" value="P:tRNA modification"/>
    <property type="evidence" value="ECO:0007669"/>
    <property type="project" value="TreeGrafter"/>
</dbReference>
<dbReference type="Gene3D" id="1.10.20.140">
    <property type="match status" value="1"/>
</dbReference>
<dbReference type="Gene3D" id="3.40.50.300">
    <property type="entry name" value="P-loop containing nucleotide triphosphate hydrolases"/>
    <property type="match status" value="1"/>
</dbReference>
<dbReference type="HAMAP" id="MF_00185">
    <property type="entry name" value="IPP_trans"/>
    <property type="match status" value="1"/>
</dbReference>
<dbReference type="InterPro" id="IPR039657">
    <property type="entry name" value="Dimethylallyltransferase"/>
</dbReference>
<dbReference type="InterPro" id="IPR018022">
    <property type="entry name" value="IPT"/>
</dbReference>
<dbReference type="InterPro" id="IPR027417">
    <property type="entry name" value="P-loop_NTPase"/>
</dbReference>
<dbReference type="NCBIfam" id="TIGR00174">
    <property type="entry name" value="miaA"/>
    <property type="match status" value="1"/>
</dbReference>
<dbReference type="PANTHER" id="PTHR11088">
    <property type="entry name" value="TRNA DIMETHYLALLYLTRANSFERASE"/>
    <property type="match status" value="1"/>
</dbReference>
<dbReference type="PANTHER" id="PTHR11088:SF60">
    <property type="entry name" value="TRNA DIMETHYLALLYLTRANSFERASE"/>
    <property type="match status" value="1"/>
</dbReference>
<dbReference type="Pfam" id="PF01715">
    <property type="entry name" value="IPPT"/>
    <property type="match status" value="1"/>
</dbReference>
<dbReference type="SUPFAM" id="SSF52540">
    <property type="entry name" value="P-loop containing nucleoside triphosphate hydrolases"/>
    <property type="match status" value="1"/>
</dbReference>
<protein>
    <recommendedName>
        <fullName evidence="1">tRNA dimethylallyltransferase</fullName>
        <ecNumber evidence="1">2.5.1.75</ecNumber>
    </recommendedName>
    <alternativeName>
        <fullName evidence="1">Dimethylallyl diphosphate:tRNA dimethylallyltransferase</fullName>
        <shortName evidence="1">DMAPP:tRNA dimethylallyltransferase</shortName>
        <shortName evidence="1">DMATase</shortName>
    </alternativeName>
    <alternativeName>
        <fullName evidence="1">Isopentenyl-diphosphate:tRNA isopentenyltransferase</fullName>
        <shortName evidence="1">IPP transferase</shortName>
        <shortName evidence="1">IPPT</shortName>
        <shortName evidence="1">IPTase</shortName>
    </alternativeName>
</protein>